<keyword id="KW-0238">DNA-binding</keyword>
<keyword id="KW-0678">Repressor</keyword>
<keyword id="KW-0804">Transcription</keyword>
<keyword id="KW-0805">Transcription regulation</keyword>
<proteinExistence type="predicted"/>
<dbReference type="EMBL" id="M33791">
    <property type="protein sequence ID" value="AAA22630.1"/>
    <property type="status" value="ALT_SEQ"/>
    <property type="molecule type" value="Genomic_DNA"/>
</dbReference>
<dbReference type="PIR" id="B35136">
    <property type="entry name" value="B35136"/>
</dbReference>
<dbReference type="SMR" id="P27871"/>
<dbReference type="eggNOG" id="COG1609">
    <property type="taxonomic scope" value="Bacteria"/>
</dbReference>
<dbReference type="GO" id="GO:0003700">
    <property type="term" value="F:DNA-binding transcription factor activity"/>
    <property type="evidence" value="ECO:0007669"/>
    <property type="project" value="TreeGrafter"/>
</dbReference>
<dbReference type="GO" id="GO:0000976">
    <property type="term" value="F:transcription cis-regulatory region binding"/>
    <property type="evidence" value="ECO:0007669"/>
    <property type="project" value="TreeGrafter"/>
</dbReference>
<dbReference type="CDD" id="cd01392">
    <property type="entry name" value="HTH_LacI"/>
    <property type="match status" value="1"/>
</dbReference>
<dbReference type="CDD" id="cd19977">
    <property type="entry name" value="PBP1_EndR-like"/>
    <property type="match status" value="1"/>
</dbReference>
<dbReference type="Gene3D" id="3.40.50.2300">
    <property type="match status" value="2"/>
</dbReference>
<dbReference type="Gene3D" id="1.10.260.40">
    <property type="entry name" value="lambda repressor-like DNA-binding domains"/>
    <property type="match status" value="1"/>
</dbReference>
<dbReference type="InterPro" id="IPR001387">
    <property type="entry name" value="Cro/C1-type_HTH"/>
</dbReference>
<dbReference type="InterPro" id="IPR000843">
    <property type="entry name" value="HTH_LacI"/>
</dbReference>
<dbReference type="InterPro" id="IPR046335">
    <property type="entry name" value="LacI/GalR-like_sensor"/>
</dbReference>
<dbReference type="InterPro" id="IPR010982">
    <property type="entry name" value="Lambda_DNA-bd_dom_sf"/>
</dbReference>
<dbReference type="InterPro" id="IPR028082">
    <property type="entry name" value="Peripla_BP_I"/>
</dbReference>
<dbReference type="PANTHER" id="PTHR30146:SF148">
    <property type="entry name" value="HTH-TYPE TRANSCRIPTIONAL REPRESSOR PURR-RELATED"/>
    <property type="match status" value="1"/>
</dbReference>
<dbReference type="PANTHER" id="PTHR30146">
    <property type="entry name" value="LACI-RELATED TRANSCRIPTIONAL REPRESSOR"/>
    <property type="match status" value="1"/>
</dbReference>
<dbReference type="Pfam" id="PF00356">
    <property type="entry name" value="LacI"/>
    <property type="match status" value="1"/>
</dbReference>
<dbReference type="Pfam" id="PF13377">
    <property type="entry name" value="Peripla_BP_3"/>
    <property type="match status" value="1"/>
</dbReference>
<dbReference type="SMART" id="SM00354">
    <property type="entry name" value="HTH_LACI"/>
    <property type="match status" value="1"/>
</dbReference>
<dbReference type="SUPFAM" id="SSF47413">
    <property type="entry name" value="lambda repressor-like DNA-binding domains"/>
    <property type="match status" value="1"/>
</dbReference>
<dbReference type="SUPFAM" id="SSF53822">
    <property type="entry name" value="Periplasmic binding protein-like I"/>
    <property type="match status" value="1"/>
</dbReference>
<dbReference type="PROSITE" id="PS00356">
    <property type="entry name" value="HTH_LACI_1"/>
    <property type="match status" value="1"/>
</dbReference>
<dbReference type="PROSITE" id="PS50932">
    <property type="entry name" value="HTH_LACI_2"/>
    <property type="match status" value="1"/>
</dbReference>
<reference key="1">
    <citation type="journal article" date="1990" name="J. Bacteriol.">
        <title>Molecular cloning, expression, and characterization of endo-beta-1,4-glucanase genes from Bacillus polymyxa and Bacillus circulans.</title>
        <authorList>
            <person name="Baird S.D."/>
            <person name="Johnson D.A."/>
            <person name="Seligy V.L."/>
        </authorList>
    </citation>
    <scope>NUCLEOTIDE SEQUENCE [GENOMIC DNA]</scope>
</reference>
<reference key="2">
    <citation type="journal article" date="1992" name="J. Biol. Chem.">
        <title>A family of bacterial regulators homologous to Gal and Lac repressors.</title>
        <authorList>
            <person name="Weickert M.J."/>
            <person name="Adhya S."/>
        </authorList>
    </citation>
    <scope>SEQUENCE REVISION</scope>
</reference>
<evidence type="ECO:0000255" key="1">
    <source>
        <dbReference type="PROSITE-ProRule" id="PRU00111"/>
    </source>
</evidence>
<sequence length="340" mass="38651">MVTTMKEVAERAGVSKSTVSQFLQKRYNYMSENTKKKIEQAIEDLSYIPNEVARSLKQKKTFIVGVISSTILSRFTTEVVRAIEDECQLENVQVIVCNTDDDSLKEKKYVQSMIARQVDGLIIFPTEENKKLYVSLVKNGYPFVFVDRKIDELSVDTVLLNNEKASRACVEALIEHGHNNIGIITFPLGKKAITTRSERLSGYRNTLGKHDIPVNENYIKSGRLDEMPNLIGQLFHMENPPTAIIATNDMILEQVLIYAKNNHLTIPNDFSLIGIDDVSFASFYNPPITTVSQPSFEMGKRSARLLLEKIDQKEQDHEELSEIIRMNPVINHRESVLKLN</sequence>
<name>ENDR_PAEPO</name>
<organism>
    <name type="scientific">Paenibacillus polymyxa</name>
    <name type="common">Bacillus polymyxa</name>
    <dbReference type="NCBI Taxonomy" id="1406"/>
    <lineage>
        <taxon>Bacteria</taxon>
        <taxon>Bacillati</taxon>
        <taxon>Bacillota</taxon>
        <taxon>Bacilli</taxon>
        <taxon>Bacillales</taxon>
        <taxon>Paenibacillaceae</taxon>
        <taxon>Paenibacillus</taxon>
    </lineage>
</organism>
<gene>
    <name type="primary">endR</name>
</gene>
<protein>
    <recommendedName>
        <fullName>Probable HTH-type transcriptional regulator EndR</fullName>
    </recommendedName>
</protein>
<accession>P27871</accession>
<comment type="function">
    <text>Putative repressor of the endoglucanase operon.</text>
</comment>
<feature type="chain" id="PRO_0000107944" description="Probable HTH-type transcriptional regulator EndR">
    <location>
        <begin position="1"/>
        <end position="340"/>
    </location>
</feature>
<feature type="domain" description="HTH lacI-type" evidence="1">
    <location>
        <begin position="1"/>
        <end position="58"/>
    </location>
</feature>
<feature type="DNA-binding region" description="H-T-H motif" evidence="1">
    <location>
        <begin position="5"/>
        <end position="24"/>
    </location>
</feature>